<name>OBG_WOLSU</name>
<comment type="function">
    <text evidence="1">An essential GTPase which binds GTP, GDP and possibly (p)ppGpp with moderate affinity, with high nucleotide exchange rates and a fairly low GTP hydrolysis rate. Plays a role in control of the cell cycle, stress response, ribosome biogenesis and in those bacteria that undergo differentiation, in morphogenesis control.</text>
</comment>
<comment type="cofactor">
    <cofactor evidence="1">
        <name>Mg(2+)</name>
        <dbReference type="ChEBI" id="CHEBI:18420"/>
    </cofactor>
</comment>
<comment type="subunit">
    <text evidence="1">Monomer.</text>
</comment>
<comment type="subcellular location">
    <subcellularLocation>
        <location evidence="1">Cytoplasm</location>
    </subcellularLocation>
</comment>
<comment type="similarity">
    <text evidence="1">Belongs to the TRAFAC class OBG-HflX-like GTPase superfamily. OBG GTPase family.</text>
</comment>
<accession>Q7MA28</accession>
<evidence type="ECO:0000255" key="1">
    <source>
        <dbReference type="HAMAP-Rule" id="MF_01454"/>
    </source>
</evidence>
<evidence type="ECO:0000255" key="2">
    <source>
        <dbReference type="PROSITE-ProRule" id="PRU01231"/>
    </source>
</evidence>
<keyword id="KW-0963">Cytoplasm</keyword>
<keyword id="KW-0342">GTP-binding</keyword>
<keyword id="KW-0378">Hydrolase</keyword>
<keyword id="KW-0460">Magnesium</keyword>
<keyword id="KW-0479">Metal-binding</keyword>
<keyword id="KW-0547">Nucleotide-binding</keyword>
<keyword id="KW-1185">Reference proteome</keyword>
<organism>
    <name type="scientific">Wolinella succinogenes (strain ATCC 29543 / DSM 1740 / CCUG 13145 / JCM 31913 / LMG 7466 / NCTC 11488 / FDC 602W)</name>
    <name type="common">Vibrio succinogenes</name>
    <dbReference type="NCBI Taxonomy" id="273121"/>
    <lineage>
        <taxon>Bacteria</taxon>
        <taxon>Pseudomonadati</taxon>
        <taxon>Campylobacterota</taxon>
        <taxon>Epsilonproteobacteria</taxon>
        <taxon>Campylobacterales</taxon>
        <taxon>Helicobacteraceae</taxon>
        <taxon>Wolinella</taxon>
    </lineage>
</organism>
<proteinExistence type="inferred from homology"/>
<protein>
    <recommendedName>
        <fullName evidence="1">GTPase Obg</fullName>
        <ecNumber evidence="1">3.6.5.-</ecNumber>
    </recommendedName>
    <alternativeName>
        <fullName evidence="1">GTP-binding protein Obg</fullName>
    </alternativeName>
</protein>
<dbReference type="EC" id="3.6.5.-" evidence="1"/>
<dbReference type="EMBL" id="BX571658">
    <property type="protein sequence ID" value="CAE09642.1"/>
    <property type="molecule type" value="Genomic_DNA"/>
</dbReference>
<dbReference type="RefSeq" id="WP_011138442.1">
    <property type="nucleotide sequence ID" value="NC_005090.1"/>
</dbReference>
<dbReference type="SMR" id="Q7MA28"/>
<dbReference type="STRING" id="273121.WS0505"/>
<dbReference type="KEGG" id="wsu:WS0505"/>
<dbReference type="eggNOG" id="COG0536">
    <property type="taxonomic scope" value="Bacteria"/>
</dbReference>
<dbReference type="HOGENOM" id="CLU_011747_2_0_7"/>
<dbReference type="Proteomes" id="UP000000422">
    <property type="component" value="Chromosome"/>
</dbReference>
<dbReference type="GO" id="GO:0005737">
    <property type="term" value="C:cytoplasm"/>
    <property type="evidence" value="ECO:0007669"/>
    <property type="project" value="UniProtKB-SubCell"/>
</dbReference>
<dbReference type="GO" id="GO:0005525">
    <property type="term" value="F:GTP binding"/>
    <property type="evidence" value="ECO:0007669"/>
    <property type="project" value="UniProtKB-UniRule"/>
</dbReference>
<dbReference type="GO" id="GO:0003924">
    <property type="term" value="F:GTPase activity"/>
    <property type="evidence" value="ECO:0007669"/>
    <property type="project" value="UniProtKB-UniRule"/>
</dbReference>
<dbReference type="GO" id="GO:0000287">
    <property type="term" value="F:magnesium ion binding"/>
    <property type="evidence" value="ECO:0007669"/>
    <property type="project" value="InterPro"/>
</dbReference>
<dbReference type="GO" id="GO:0042254">
    <property type="term" value="P:ribosome biogenesis"/>
    <property type="evidence" value="ECO:0007669"/>
    <property type="project" value="UniProtKB-UniRule"/>
</dbReference>
<dbReference type="CDD" id="cd01898">
    <property type="entry name" value="Obg"/>
    <property type="match status" value="1"/>
</dbReference>
<dbReference type="FunFam" id="2.70.210.12:FF:000001">
    <property type="entry name" value="GTPase Obg"/>
    <property type="match status" value="1"/>
</dbReference>
<dbReference type="Gene3D" id="2.70.210.12">
    <property type="entry name" value="GTP1/OBG domain"/>
    <property type="match status" value="1"/>
</dbReference>
<dbReference type="Gene3D" id="3.40.50.300">
    <property type="entry name" value="P-loop containing nucleotide triphosphate hydrolases"/>
    <property type="match status" value="1"/>
</dbReference>
<dbReference type="HAMAP" id="MF_01454">
    <property type="entry name" value="GTPase_Obg"/>
    <property type="match status" value="1"/>
</dbReference>
<dbReference type="InterPro" id="IPR031167">
    <property type="entry name" value="G_OBG"/>
</dbReference>
<dbReference type="InterPro" id="IPR006073">
    <property type="entry name" value="GTP-bd"/>
</dbReference>
<dbReference type="InterPro" id="IPR014100">
    <property type="entry name" value="GTP-bd_Obg/CgtA"/>
</dbReference>
<dbReference type="InterPro" id="IPR006169">
    <property type="entry name" value="GTP1_OBG_dom"/>
</dbReference>
<dbReference type="InterPro" id="IPR036726">
    <property type="entry name" value="GTP1_OBG_dom_sf"/>
</dbReference>
<dbReference type="InterPro" id="IPR045086">
    <property type="entry name" value="OBG_GTPase"/>
</dbReference>
<dbReference type="InterPro" id="IPR027417">
    <property type="entry name" value="P-loop_NTPase"/>
</dbReference>
<dbReference type="NCBIfam" id="TIGR02729">
    <property type="entry name" value="Obg_CgtA"/>
    <property type="match status" value="1"/>
</dbReference>
<dbReference type="NCBIfam" id="NF008955">
    <property type="entry name" value="PRK12297.1"/>
    <property type="match status" value="1"/>
</dbReference>
<dbReference type="NCBIfam" id="NF008956">
    <property type="entry name" value="PRK12299.1"/>
    <property type="match status" value="1"/>
</dbReference>
<dbReference type="PANTHER" id="PTHR11702">
    <property type="entry name" value="DEVELOPMENTALLY REGULATED GTP-BINDING PROTEIN-RELATED"/>
    <property type="match status" value="1"/>
</dbReference>
<dbReference type="PANTHER" id="PTHR11702:SF31">
    <property type="entry name" value="MITOCHONDRIAL RIBOSOME-ASSOCIATED GTPASE 2"/>
    <property type="match status" value="1"/>
</dbReference>
<dbReference type="Pfam" id="PF01018">
    <property type="entry name" value="GTP1_OBG"/>
    <property type="match status" value="1"/>
</dbReference>
<dbReference type="Pfam" id="PF01926">
    <property type="entry name" value="MMR_HSR1"/>
    <property type="match status" value="1"/>
</dbReference>
<dbReference type="PIRSF" id="PIRSF002401">
    <property type="entry name" value="GTP_bd_Obg/CgtA"/>
    <property type="match status" value="1"/>
</dbReference>
<dbReference type="PRINTS" id="PR00326">
    <property type="entry name" value="GTP1OBG"/>
</dbReference>
<dbReference type="SUPFAM" id="SSF82051">
    <property type="entry name" value="Obg GTP-binding protein N-terminal domain"/>
    <property type="match status" value="1"/>
</dbReference>
<dbReference type="SUPFAM" id="SSF52540">
    <property type="entry name" value="P-loop containing nucleoside triphosphate hydrolases"/>
    <property type="match status" value="1"/>
</dbReference>
<dbReference type="PROSITE" id="PS51710">
    <property type="entry name" value="G_OBG"/>
    <property type="match status" value="1"/>
</dbReference>
<dbReference type="PROSITE" id="PS51883">
    <property type="entry name" value="OBG"/>
    <property type="match status" value="1"/>
</dbReference>
<gene>
    <name evidence="1" type="primary">obg</name>
    <name type="ordered locus">WS0505</name>
</gene>
<sequence>MFVDNVDIYVSSGKGGAGAVSFRREKYVIQGGPDGGDGGKGGDLYFEVNANTDTLSKFKGAKHYRAKNGQPGMGRRMSGKSGEEMVIVVPPGTQVFDYESNELLLDLKEEGMRVKFLEGGKGGLGNYHFKNSVNQRPTYAQPGIAGEERHVRLELKLIADVGLVGFPNVGKSTLISTLSNARPEVANYEFTTLIPALGVVDVDEFSSFVMADIPGIIGGASEGKGLGLEFLRHIERTKTLLFVIDLSNYREPLEQFEILQKELSQFSPELSLRPFGIALSKVDALSKEEANEKIELFLKGIGLSSCQSNQYALSEALQNYIAPLESSIPAFVVPISSATHENIKPLKYLLHESVRRRG</sequence>
<reference key="1">
    <citation type="journal article" date="2003" name="Proc. Natl. Acad. Sci. U.S.A.">
        <title>Complete genome sequence and analysis of Wolinella succinogenes.</title>
        <authorList>
            <person name="Baar C."/>
            <person name="Eppinger M."/>
            <person name="Raddatz G."/>
            <person name="Simon J."/>
            <person name="Lanz C."/>
            <person name="Klimmek O."/>
            <person name="Nandakumar R."/>
            <person name="Gross R."/>
            <person name="Rosinus A."/>
            <person name="Keller H."/>
            <person name="Jagtap P."/>
            <person name="Linke B."/>
            <person name="Meyer F."/>
            <person name="Lederer H."/>
            <person name="Schuster S.C."/>
        </authorList>
    </citation>
    <scope>NUCLEOTIDE SEQUENCE [LARGE SCALE GENOMIC DNA]</scope>
    <source>
        <strain>ATCC 29543 / DSM 1740 / CCUG 13145 / JCM 31913 / LMG 7466 / NCTC 11488 / FDC 602W</strain>
    </source>
</reference>
<feature type="chain" id="PRO_0000386391" description="GTPase Obg">
    <location>
        <begin position="1"/>
        <end position="358"/>
    </location>
</feature>
<feature type="domain" description="Obg" evidence="2">
    <location>
        <begin position="1"/>
        <end position="158"/>
    </location>
</feature>
<feature type="domain" description="OBG-type G" evidence="1">
    <location>
        <begin position="159"/>
        <end position="355"/>
    </location>
</feature>
<feature type="binding site" evidence="1">
    <location>
        <begin position="165"/>
        <end position="172"/>
    </location>
    <ligand>
        <name>GTP</name>
        <dbReference type="ChEBI" id="CHEBI:37565"/>
    </ligand>
</feature>
<feature type="binding site" evidence="1">
    <location>
        <position position="172"/>
    </location>
    <ligand>
        <name>Mg(2+)</name>
        <dbReference type="ChEBI" id="CHEBI:18420"/>
    </ligand>
</feature>
<feature type="binding site" evidence="1">
    <location>
        <begin position="190"/>
        <end position="194"/>
    </location>
    <ligand>
        <name>GTP</name>
        <dbReference type="ChEBI" id="CHEBI:37565"/>
    </ligand>
</feature>
<feature type="binding site" evidence="1">
    <location>
        <position position="192"/>
    </location>
    <ligand>
        <name>Mg(2+)</name>
        <dbReference type="ChEBI" id="CHEBI:18420"/>
    </ligand>
</feature>
<feature type="binding site" evidence="1">
    <location>
        <begin position="212"/>
        <end position="215"/>
    </location>
    <ligand>
        <name>GTP</name>
        <dbReference type="ChEBI" id="CHEBI:37565"/>
    </ligand>
</feature>
<feature type="binding site" evidence="1">
    <location>
        <begin position="280"/>
        <end position="283"/>
    </location>
    <ligand>
        <name>GTP</name>
        <dbReference type="ChEBI" id="CHEBI:37565"/>
    </ligand>
</feature>
<feature type="binding site" evidence="1">
    <location>
        <begin position="336"/>
        <end position="338"/>
    </location>
    <ligand>
        <name>GTP</name>
        <dbReference type="ChEBI" id="CHEBI:37565"/>
    </ligand>
</feature>